<protein>
    <recommendedName>
        <fullName>Transmembrane protein 231</fullName>
    </recommendedName>
</protein>
<accession>Q3U284</accession>
<accession>Q497S7</accession>
<reference key="1">
    <citation type="journal article" date="2005" name="Science">
        <title>The transcriptional landscape of the mammalian genome.</title>
        <authorList>
            <person name="Carninci P."/>
            <person name="Kasukawa T."/>
            <person name="Katayama S."/>
            <person name="Gough J."/>
            <person name="Frith M.C."/>
            <person name="Maeda N."/>
            <person name="Oyama R."/>
            <person name="Ravasi T."/>
            <person name="Lenhard B."/>
            <person name="Wells C."/>
            <person name="Kodzius R."/>
            <person name="Shimokawa K."/>
            <person name="Bajic V.B."/>
            <person name="Brenner S.E."/>
            <person name="Batalov S."/>
            <person name="Forrest A.R."/>
            <person name="Zavolan M."/>
            <person name="Davis M.J."/>
            <person name="Wilming L.G."/>
            <person name="Aidinis V."/>
            <person name="Allen J.E."/>
            <person name="Ambesi-Impiombato A."/>
            <person name="Apweiler R."/>
            <person name="Aturaliya R.N."/>
            <person name="Bailey T.L."/>
            <person name="Bansal M."/>
            <person name="Baxter L."/>
            <person name="Beisel K.W."/>
            <person name="Bersano T."/>
            <person name="Bono H."/>
            <person name="Chalk A.M."/>
            <person name="Chiu K.P."/>
            <person name="Choudhary V."/>
            <person name="Christoffels A."/>
            <person name="Clutterbuck D.R."/>
            <person name="Crowe M.L."/>
            <person name="Dalla E."/>
            <person name="Dalrymple B.P."/>
            <person name="de Bono B."/>
            <person name="Della Gatta G."/>
            <person name="di Bernardo D."/>
            <person name="Down T."/>
            <person name="Engstrom P."/>
            <person name="Fagiolini M."/>
            <person name="Faulkner G."/>
            <person name="Fletcher C.F."/>
            <person name="Fukushima T."/>
            <person name="Furuno M."/>
            <person name="Futaki S."/>
            <person name="Gariboldi M."/>
            <person name="Georgii-Hemming P."/>
            <person name="Gingeras T.R."/>
            <person name="Gojobori T."/>
            <person name="Green R.E."/>
            <person name="Gustincich S."/>
            <person name="Harbers M."/>
            <person name="Hayashi Y."/>
            <person name="Hensch T.K."/>
            <person name="Hirokawa N."/>
            <person name="Hill D."/>
            <person name="Huminiecki L."/>
            <person name="Iacono M."/>
            <person name="Ikeo K."/>
            <person name="Iwama A."/>
            <person name="Ishikawa T."/>
            <person name="Jakt M."/>
            <person name="Kanapin A."/>
            <person name="Katoh M."/>
            <person name="Kawasawa Y."/>
            <person name="Kelso J."/>
            <person name="Kitamura H."/>
            <person name="Kitano H."/>
            <person name="Kollias G."/>
            <person name="Krishnan S.P."/>
            <person name="Kruger A."/>
            <person name="Kummerfeld S.K."/>
            <person name="Kurochkin I.V."/>
            <person name="Lareau L.F."/>
            <person name="Lazarevic D."/>
            <person name="Lipovich L."/>
            <person name="Liu J."/>
            <person name="Liuni S."/>
            <person name="McWilliam S."/>
            <person name="Madan Babu M."/>
            <person name="Madera M."/>
            <person name="Marchionni L."/>
            <person name="Matsuda H."/>
            <person name="Matsuzawa S."/>
            <person name="Miki H."/>
            <person name="Mignone F."/>
            <person name="Miyake S."/>
            <person name="Morris K."/>
            <person name="Mottagui-Tabar S."/>
            <person name="Mulder N."/>
            <person name="Nakano N."/>
            <person name="Nakauchi H."/>
            <person name="Ng P."/>
            <person name="Nilsson R."/>
            <person name="Nishiguchi S."/>
            <person name="Nishikawa S."/>
            <person name="Nori F."/>
            <person name="Ohara O."/>
            <person name="Okazaki Y."/>
            <person name="Orlando V."/>
            <person name="Pang K.C."/>
            <person name="Pavan W.J."/>
            <person name="Pavesi G."/>
            <person name="Pesole G."/>
            <person name="Petrovsky N."/>
            <person name="Piazza S."/>
            <person name="Reed J."/>
            <person name="Reid J.F."/>
            <person name="Ring B.Z."/>
            <person name="Ringwald M."/>
            <person name="Rost B."/>
            <person name="Ruan Y."/>
            <person name="Salzberg S.L."/>
            <person name="Sandelin A."/>
            <person name="Schneider C."/>
            <person name="Schoenbach C."/>
            <person name="Sekiguchi K."/>
            <person name="Semple C.A."/>
            <person name="Seno S."/>
            <person name="Sessa L."/>
            <person name="Sheng Y."/>
            <person name="Shibata Y."/>
            <person name="Shimada H."/>
            <person name="Shimada K."/>
            <person name="Silva D."/>
            <person name="Sinclair B."/>
            <person name="Sperling S."/>
            <person name="Stupka E."/>
            <person name="Sugiura K."/>
            <person name="Sultana R."/>
            <person name="Takenaka Y."/>
            <person name="Taki K."/>
            <person name="Tammoja K."/>
            <person name="Tan S.L."/>
            <person name="Tang S."/>
            <person name="Taylor M.S."/>
            <person name="Tegner J."/>
            <person name="Teichmann S.A."/>
            <person name="Ueda H.R."/>
            <person name="van Nimwegen E."/>
            <person name="Verardo R."/>
            <person name="Wei C.L."/>
            <person name="Yagi K."/>
            <person name="Yamanishi H."/>
            <person name="Zabarovsky E."/>
            <person name="Zhu S."/>
            <person name="Zimmer A."/>
            <person name="Hide W."/>
            <person name="Bult C."/>
            <person name="Grimmond S.M."/>
            <person name="Teasdale R.D."/>
            <person name="Liu E.T."/>
            <person name="Brusic V."/>
            <person name="Quackenbush J."/>
            <person name="Wahlestedt C."/>
            <person name="Mattick J.S."/>
            <person name="Hume D.A."/>
            <person name="Kai C."/>
            <person name="Sasaki D."/>
            <person name="Tomaru Y."/>
            <person name="Fukuda S."/>
            <person name="Kanamori-Katayama M."/>
            <person name="Suzuki M."/>
            <person name="Aoki J."/>
            <person name="Arakawa T."/>
            <person name="Iida J."/>
            <person name="Imamura K."/>
            <person name="Itoh M."/>
            <person name="Kato T."/>
            <person name="Kawaji H."/>
            <person name="Kawagashira N."/>
            <person name="Kawashima T."/>
            <person name="Kojima M."/>
            <person name="Kondo S."/>
            <person name="Konno H."/>
            <person name="Nakano K."/>
            <person name="Ninomiya N."/>
            <person name="Nishio T."/>
            <person name="Okada M."/>
            <person name="Plessy C."/>
            <person name="Shibata K."/>
            <person name="Shiraki T."/>
            <person name="Suzuki S."/>
            <person name="Tagami M."/>
            <person name="Waki K."/>
            <person name="Watahiki A."/>
            <person name="Okamura-Oho Y."/>
            <person name="Suzuki H."/>
            <person name="Kawai J."/>
            <person name="Hayashizaki Y."/>
        </authorList>
    </citation>
    <scope>NUCLEOTIDE SEQUENCE [LARGE SCALE MRNA]</scope>
    <source>
        <strain>NOD</strain>
    </source>
</reference>
<reference key="2">
    <citation type="journal article" date="2004" name="Genome Res.">
        <title>The status, quality, and expansion of the NIH full-length cDNA project: the Mammalian Gene Collection (MGC).</title>
        <authorList>
            <consortium name="The MGC Project Team"/>
        </authorList>
    </citation>
    <scope>NUCLEOTIDE SEQUENCE [LARGE SCALE MRNA]</scope>
    <source>
        <strain>C57BL/6J</strain>
        <tissue>Brain</tissue>
        <tissue>Embryonic germ cell</tissue>
    </source>
</reference>
<reference key="3">
    <citation type="journal article" date="2012" name="Nat. Cell Biol.">
        <title>A ciliopathy complex at the transition zone protects the cilia as a privileged membrane domain.</title>
        <authorList>
            <person name="Chih B."/>
            <person name="Liu P."/>
            <person name="Chinn Y."/>
            <person name="Chalouni C."/>
            <person name="Komuves L.G."/>
            <person name="Hass P.E."/>
            <person name="Sandoval W."/>
            <person name="Peterson A.S."/>
        </authorList>
    </citation>
    <scope>IDENTIFICATION IN THE TECTONIC-LIKE COMPLEX</scope>
    <scope>FUNCTION</scope>
    <scope>SUBCELLULAR LOCATION</scope>
    <scope>DISRUPTION PHENOTYPE</scope>
</reference>
<dbReference type="EMBL" id="AK155425">
    <property type="protein sequence ID" value="BAE33258.1"/>
    <property type="molecule type" value="mRNA"/>
</dbReference>
<dbReference type="EMBL" id="BC100402">
    <property type="protein sequence ID" value="AAI00403.2"/>
    <property type="molecule type" value="mRNA"/>
</dbReference>
<dbReference type="EMBL" id="BC132428">
    <property type="protein sequence ID" value="AAI32429.1"/>
    <property type="molecule type" value="mRNA"/>
</dbReference>
<dbReference type="EMBL" id="BC132430">
    <property type="protein sequence ID" value="AAI32431.1"/>
    <property type="molecule type" value="mRNA"/>
</dbReference>
<dbReference type="CCDS" id="CCDS52676.1"/>
<dbReference type="RefSeq" id="NP_001028493.1">
    <property type="nucleotide sequence ID" value="NM_001033321.2"/>
</dbReference>
<dbReference type="BioGRID" id="231574">
    <property type="interactions" value="2"/>
</dbReference>
<dbReference type="CORUM" id="Q3U284"/>
<dbReference type="FunCoup" id="Q3U284">
    <property type="interactions" value="284"/>
</dbReference>
<dbReference type="IntAct" id="Q3U284">
    <property type="interactions" value="5"/>
</dbReference>
<dbReference type="STRING" id="10090.ENSMUSP00000034429"/>
<dbReference type="GlyCosmos" id="Q3U284">
    <property type="glycosylation" value="3 sites, No reported glycans"/>
</dbReference>
<dbReference type="GlyGen" id="Q3U284">
    <property type="glycosylation" value="3 sites, 1 N-linked glycan (1 site)"/>
</dbReference>
<dbReference type="PhosphoSitePlus" id="Q3U284"/>
<dbReference type="SwissPalm" id="Q3U284"/>
<dbReference type="PaxDb" id="10090-ENSMUSP00000034429"/>
<dbReference type="PeptideAtlas" id="Q3U284"/>
<dbReference type="ProteomicsDB" id="259555"/>
<dbReference type="Pumba" id="Q3U284"/>
<dbReference type="Antibodypedia" id="8257">
    <property type="antibodies" value="47 antibodies from 19 providers"/>
</dbReference>
<dbReference type="DNASU" id="234740"/>
<dbReference type="Ensembl" id="ENSMUST00000034429.9">
    <property type="protein sequence ID" value="ENSMUSP00000034429.8"/>
    <property type="gene ID" value="ENSMUSG00000031951.9"/>
</dbReference>
<dbReference type="GeneID" id="234740"/>
<dbReference type="KEGG" id="mmu:234740"/>
<dbReference type="UCSC" id="uc009nna.1">
    <property type="organism name" value="mouse"/>
</dbReference>
<dbReference type="AGR" id="MGI:2685024"/>
<dbReference type="CTD" id="79583"/>
<dbReference type="MGI" id="MGI:2685024">
    <property type="gene designation" value="Tmem231"/>
</dbReference>
<dbReference type="VEuPathDB" id="HostDB:ENSMUSG00000031951"/>
<dbReference type="eggNOG" id="KOG4838">
    <property type="taxonomic scope" value="Eukaryota"/>
</dbReference>
<dbReference type="GeneTree" id="ENSGT00390000015366"/>
<dbReference type="HOGENOM" id="CLU_070969_0_0_1"/>
<dbReference type="InParanoid" id="Q3U284"/>
<dbReference type="OMA" id="PALYTRY"/>
<dbReference type="OrthoDB" id="426438at2759"/>
<dbReference type="PhylomeDB" id="Q3U284"/>
<dbReference type="TreeFam" id="TF312969"/>
<dbReference type="BioGRID-ORCS" id="234740">
    <property type="hits" value="5 hits in 78 CRISPR screens"/>
</dbReference>
<dbReference type="ChiTaRS" id="Tmem231">
    <property type="organism name" value="mouse"/>
</dbReference>
<dbReference type="PRO" id="PR:Q3U284"/>
<dbReference type="Proteomes" id="UP000000589">
    <property type="component" value="Chromosome 8"/>
</dbReference>
<dbReference type="RNAct" id="Q3U284">
    <property type="molecule type" value="protein"/>
</dbReference>
<dbReference type="Bgee" id="ENSMUSG00000031951">
    <property type="expression patterns" value="Expressed in embryonic cell in blastocyst and 185 other cell types or tissues"/>
</dbReference>
<dbReference type="ExpressionAtlas" id="Q3U284">
    <property type="expression patterns" value="baseline and differential"/>
</dbReference>
<dbReference type="GO" id="GO:0060170">
    <property type="term" value="C:ciliary membrane"/>
    <property type="evidence" value="ECO:0000314"/>
    <property type="project" value="UniProtKB"/>
</dbReference>
<dbReference type="GO" id="GO:0035869">
    <property type="term" value="C:ciliary transition zone"/>
    <property type="evidence" value="ECO:0000314"/>
    <property type="project" value="UniProtKB"/>
</dbReference>
<dbReference type="GO" id="GO:0016020">
    <property type="term" value="C:membrane"/>
    <property type="evidence" value="ECO:0000314"/>
    <property type="project" value="MGI"/>
</dbReference>
<dbReference type="GO" id="GO:0036038">
    <property type="term" value="C:MKS complex"/>
    <property type="evidence" value="ECO:0000314"/>
    <property type="project" value="UniProtKB"/>
</dbReference>
<dbReference type="GO" id="GO:0043010">
    <property type="term" value="P:camera-type eye development"/>
    <property type="evidence" value="ECO:0000315"/>
    <property type="project" value="MGI"/>
</dbReference>
<dbReference type="GO" id="GO:0060271">
    <property type="term" value="P:cilium assembly"/>
    <property type="evidence" value="ECO:0000315"/>
    <property type="project" value="UniProtKB"/>
</dbReference>
<dbReference type="GO" id="GO:0042733">
    <property type="term" value="P:embryonic digit morphogenesis"/>
    <property type="evidence" value="ECO:0000315"/>
    <property type="project" value="MGI"/>
</dbReference>
<dbReference type="GO" id="GO:0001701">
    <property type="term" value="P:in utero embryonic development"/>
    <property type="evidence" value="ECO:0000315"/>
    <property type="project" value="MGI"/>
</dbReference>
<dbReference type="GO" id="GO:0060563">
    <property type="term" value="P:neuroepithelial cell differentiation"/>
    <property type="evidence" value="ECO:0000315"/>
    <property type="project" value="MGI"/>
</dbReference>
<dbReference type="GO" id="GO:0032880">
    <property type="term" value="P:regulation of protein localization"/>
    <property type="evidence" value="ECO:0000315"/>
    <property type="project" value="MGI"/>
</dbReference>
<dbReference type="GO" id="GO:0007224">
    <property type="term" value="P:smoothened signaling pathway"/>
    <property type="evidence" value="ECO:0000315"/>
    <property type="project" value="UniProtKB"/>
</dbReference>
<dbReference type="GO" id="GO:0001944">
    <property type="term" value="P:vasculature development"/>
    <property type="evidence" value="ECO:0000315"/>
    <property type="project" value="MGI"/>
</dbReference>
<dbReference type="InterPro" id="IPR019306">
    <property type="entry name" value="TMEM231"/>
</dbReference>
<dbReference type="PANTHER" id="PTHR14605">
    <property type="entry name" value="CHST5 PROTEIN"/>
    <property type="match status" value="1"/>
</dbReference>
<dbReference type="PANTHER" id="PTHR14605:SF1">
    <property type="entry name" value="TRANSMEMBRANE PROTEIN 231"/>
    <property type="match status" value="1"/>
</dbReference>
<dbReference type="Pfam" id="PF10149">
    <property type="entry name" value="TM231"/>
    <property type="match status" value="1"/>
</dbReference>
<organism>
    <name type="scientific">Mus musculus</name>
    <name type="common">Mouse</name>
    <dbReference type="NCBI Taxonomy" id="10090"/>
    <lineage>
        <taxon>Eukaryota</taxon>
        <taxon>Metazoa</taxon>
        <taxon>Chordata</taxon>
        <taxon>Craniata</taxon>
        <taxon>Vertebrata</taxon>
        <taxon>Euteleostomi</taxon>
        <taxon>Mammalia</taxon>
        <taxon>Eutheria</taxon>
        <taxon>Euarchontoglires</taxon>
        <taxon>Glires</taxon>
        <taxon>Rodentia</taxon>
        <taxon>Myomorpha</taxon>
        <taxon>Muroidea</taxon>
        <taxon>Muridae</taxon>
        <taxon>Murinae</taxon>
        <taxon>Mus</taxon>
        <taxon>Mus</taxon>
    </lineage>
</organism>
<evidence type="ECO:0000250" key="1">
    <source>
        <dbReference type="UniProtKB" id="Q9H6L2"/>
    </source>
</evidence>
<evidence type="ECO:0000255" key="2"/>
<evidence type="ECO:0000269" key="3">
    <source>
    </source>
</evidence>
<evidence type="ECO:0000305" key="4"/>
<comment type="function">
    <text evidence="3">Transmembrane component of the tectonic-like complex, a complex localized at the transition zone of primary cilia and acting as a barrier that prevents diffusion of transmembrane proteins between the cilia and plasma membranes. Required for ciliogenesis and sonic hedgehog/SHH signaling.</text>
</comment>
<comment type="subunit">
    <text evidence="1 3">Part of the tectonic-like complex (also named B9 complex) (PubMed:22179047). Interacts with TMEM107 (By similarity).</text>
</comment>
<comment type="subcellular location">
    <subcellularLocation>
        <location evidence="3">Cell projection</location>
        <location evidence="3">Cilium membrane</location>
        <topology evidence="3">Multi-pass membrane protein</topology>
    </subcellularLocation>
    <text>Localizes to the transition zone of primary cilia; SEPT2 is required for localization to the transition zone.</text>
</comment>
<comment type="disruption phenotype">
    <text evidence="3">Embryos die around 15.5 dpc with severe vascular defects. 10.5 dpc mutant embryos have defects in patterning of the ventral spinal cord that are characteristic of defects in Shh signaling. 14.5 dpc embryos exhibit microphthalmia and polydactyly, consistent with disruptions in Shh signaling.</text>
</comment>
<comment type="similarity">
    <text evidence="4">Belongs to the TMEM231 family.</text>
</comment>
<sequence>MALYHLFSHPIERAYRAGLCSKAALFLLLTTALTYIPPLLVAFRSHGFWLKRSSYEEQPNVRFQHQVLLVALLGPEPEAFLAWSTFPTFNRLQGAHLRVPLVSSREEDRNQDGKMDVLYFKLELPLQPTEHVLGVQLILTFSYQLHRMSTFEMQSMAFLQSSFAVPGSQLYVNGDLRLQQKQPLSYRGLDIRYNVSVINGTSPFAQDYDLTHIVAAYQERNVTTVLSDPNPIWLVGRAAEAPFVIHAVIRYPTEVISYQPGFWEMIKFAWIQYVSILLIFLWVFERIKIFVFQNQVVTSIPVAVPQGEIRKEHLS</sequence>
<gene>
    <name type="primary">Tmem231</name>
</gene>
<keyword id="KW-1003">Cell membrane</keyword>
<keyword id="KW-0966">Cell projection</keyword>
<keyword id="KW-0969">Cilium</keyword>
<keyword id="KW-0970">Cilium biogenesis/degradation</keyword>
<keyword id="KW-0325">Glycoprotein</keyword>
<keyword id="KW-0472">Membrane</keyword>
<keyword id="KW-1185">Reference proteome</keyword>
<keyword id="KW-0812">Transmembrane</keyword>
<keyword id="KW-1133">Transmembrane helix</keyword>
<name>TM231_MOUSE</name>
<feature type="chain" id="PRO_0000317521" description="Transmembrane protein 231">
    <location>
        <begin position="1"/>
        <end position="315"/>
    </location>
</feature>
<feature type="transmembrane region" description="Helical" evidence="2">
    <location>
        <begin position="23"/>
        <end position="43"/>
    </location>
</feature>
<feature type="transmembrane region" description="Helical" evidence="2">
    <location>
        <begin position="262"/>
        <end position="282"/>
    </location>
</feature>
<feature type="glycosylation site" description="N-linked (GlcNAc...) asparagine" evidence="2">
    <location>
        <position position="194"/>
    </location>
</feature>
<feature type="glycosylation site" description="N-linked (GlcNAc...) asparagine" evidence="2">
    <location>
        <position position="199"/>
    </location>
</feature>
<feature type="glycosylation site" description="N-linked (GlcNAc...) asparagine" evidence="2">
    <location>
        <position position="221"/>
    </location>
</feature>
<proteinExistence type="evidence at protein level"/>